<accession>A5UK11</accession>
<gene>
    <name evidence="1" type="primary">gatD</name>
    <name type="ordered locus">Msm_0334</name>
</gene>
<sequence length="436" mass="48085">MTYKEIAKKYLENNGITIGDTIKINKEDISYEGILLDRSEDSEDGYLVLKLDSGYNVGVAIENTQAELIQKGDKPKIGYGAEDIAHDPSKQNISIISTGGTVSSIIDYRTGAVHPKFTAADLIKANPELLDYANYNVKALYNILSENMQPKYWVEAAESIANDISDGSDGIVIAHGTDTLHYTAAALSFMLKTPVPIVITGAQRSSDRPSSDANMNLIDSVVAAKSDIAEVSVCMHGSLNDSYTYLHKGTKVRKMHTSRRDTFRSINYEPIAKIENHSVDINPNYRYTKRNENELEVNSAVEEKVGLIKSFPGICEELIEYHIDKGYKGLVIEGTGLGHVPDKLITPLARAHDENIPVVMTSQCLYGRVNMNVYSTGREILNAGVISGRDMTPETAYVKLSWVLGQTNDIGEVAKLMNKNIAGEFNEKSSIKYFLN</sequence>
<organism>
    <name type="scientific">Methanobrevibacter smithii (strain ATCC 35061 / DSM 861 / OCM 144 / PS)</name>
    <dbReference type="NCBI Taxonomy" id="420247"/>
    <lineage>
        <taxon>Archaea</taxon>
        <taxon>Methanobacteriati</taxon>
        <taxon>Methanobacteriota</taxon>
        <taxon>Methanomada group</taxon>
        <taxon>Methanobacteria</taxon>
        <taxon>Methanobacteriales</taxon>
        <taxon>Methanobacteriaceae</taxon>
        <taxon>Methanobrevibacter</taxon>
    </lineage>
</organism>
<comment type="function">
    <text evidence="1">Allows the formation of correctly charged Gln-tRNA(Gln) through the transamidation of misacylated Glu-tRNA(Gln) in organisms which lack glutaminyl-tRNA synthetase. The reaction takes place in the presence of glutamine and ATP through an activated gamma-phospho-Glu-tRNA(Gln). The GatDE system is specific for glutamate and does not act on aspartate.</text>
</comment>
<comment type="catalytic activity">
    <reaction evidence="1">
        <text>L-glutamyl-tRNA(Gln) + L-glutamine + ATP + H2O = L-glutaminyl-tRNA(Gln) + L-glutamate + ADP + phosphate + H(+)</text>
        <dbReference type="Rhea" id="RHEA:17521"/>
        <dbReference type="Rhea" id="RHEA-COMP:9681"/>
        <dbReference type="Rhea" id="RHEA-COMP:9684"/>
        <dbReference type="ChEBI" id="CHEBI:15377"/>
        <dbReference type="ChEBI" id="CHEBI:15378"/>
        <dbReference type="ChEBI" id="CHEBI:29985"/>
        <dbReference type="ChEBI" id="CHEBI:30616"/>
        <dbReference type="ChEBI" id="CHEBI:43474"/>
        <dbReference type="ChEBI" id="CHEBI:58359"/>
        <dbReference type="ChEBI" id="CHEBI:78520"/>
        <dbReference type="ChEBI" id="CHEBI:78521"/>
        <dbReference type="ChEBI" id="CHEBI:456216"/>
    </reaction>
</comment>
<comment type="subunit">
    <text evidence="1">Heterodimer of GatD and GatE.</text>
</comment>
<comment type="similarity">
    <text evidence="1">Belongs to the asparaginase 1 family. GatD subfamily.</text>
</comment>
<dbReference type="EC" id="6.3.5.-" evidence="1"/>
<dbReference type="EMBL" id="CP000678">
    <property type="protein sequence ID" value="ABQ86539.1"/>
    <property type="molecule type" value="Genomic_DNA"/>
</dbReference>
<dbReference type="RefSeq" id="WP_004034538.1">
    <property type="nucleotide sequence ID" value="NZ_CP117965.1"/>
</dbReference>
<dbReference type="SMR" id="A5UK11"/>
<dbReference type="STRING" id="420247.Msm_0334"/>
<dbReference type="EnsemblBacteria" id="ABQ86539">
    <property type="protein sequence ID" value="ABQ86539"/>
    <property type="gene ID" value="Msm_0334"/>
</dbReference>
<dbReference type="GeneID" id="78816958"/>
<dbReference type="KEGG" id="msi:Msm_0334"/>
<dbReference type="PATRIC" id="fig|420247.28.peg.337"/>
<dbReference type="eggNOG" id="arCOG01924">
    <property type="taxonomic scope" value="Archaea"/>
</dbReference>
<dbReference type="HOGENOM" id="CLU_019134_2_1_2"/>
<dbReference type="Proteomes" id="UP000001992">
    <property type="component" value="Chromosome"/>
</dbReference>
<dbReference type="GO" id="GO:0004067">
    <property type="term" value="F:asparaginase activity"/>
    <property type="evidence" value="ECO:0007669"/>
    <property type="project" value="InterPro"/>
</dbReference>
<dbReference type="GO" id="GO:0005524">
    <property type="term" value="F:ATP binding"/>
    <property type="evidence" value="ECO:0007669"/>
    <property type="project" value="UniProtKB-KW"/>
</dbReference>
<dbReference type="GO" id="GO:0050567">
    <property type="term" value="F:glutaminyl-tRNA synthase (glutamine-hydrolyzing) activity"/>
    <property type="evidence" value="ECO:0007669"/>
    <property type="project" value="UniProtKB-UniRule"/>
</dbReference>
<dbReference type="GO" id="GO:0006520">
    <property type="term" value="P:amino acid metabolic process"/>
    <property type="evidence" value="ECO:0007669"/>
    <property type="project" value="InterPro"/>
</dbReference>
<dbReference type="GO" id="GO:0006450">
    <property type="term" value="P:regulation of translational fidelity"/>
    <property type="evidence" value="ECO:0007669"/>
    <property type="project" value="InterPro"/>
</dbReference>
<dbReference type="GO" id="GO:0006412">
    <property type="term" value="P:translation"/>
    <property type="evidence" value="ECO:0007669"/>
    <property type="project" value="UniProtKB-UniRule"/>
</dbReference>
<dbReference type="CDD" id="cd08962">
    <property type="entry name" value="GatD"/>
    <property type="match status" value="1"/>
</dbReference>
<dbReference type="FunFam" id="3.40.50.1170:FF:000001">
    <property type="entry name" value="L-asparaginase 2"/>
    <property type="match status" value="1"/>
</dbReference>
<dbReference type="Gene3D" id="2.30.30.520">
    <property type="match status" value="1"/>
</dbReference>
<dbReference type="Gene3D" id="3.40.50.40">
    <property type="match status" value="1"/>
</dbReference>
<dbReference type="Gene3D" id="3.40.50.1170">
    <property type="entry name" value="L-asparaginase, N-terminal domain"/>
    <property type="match status" value="1"/>
</dbReference>
<dbReference type="HAMAP" id="MF_00586">
    <property type="entry name" value="GatD"/>
    <property type="match status" value="1"/>
</dbReference>
<dbReference type="InterPro" id="IPR006033">
    <property type="entry name" value="AsnA_fam"/>
</dbReference>
<dbReference type="InterPro" id="IPR036152">
    <property type="entry name" value="Asp/glu_Ase-like_sf"/>
</dbReference>
<dbReference type="InterPro" id="IPR006034">
    <property type="entry name" value="Asparaginase/glutaminase-like"/>
</dbReference>
<dbReference type="InterPro" id="IPR027475">
    <property type="entry name" value="Asparaginase/glutaminase_AS2"/>
</dbReference>
<dbReference type="InterPro" id="IPR040919">
    <property type="entry name" value="Asparaginase_C"/>
</dbReference>
<dbReference type="InterPro" id="IPR011878">
    <property type="entry name" value="GatD"/>
</dbReference>
<dbReference type="InterPro" id="IPR040918">
    <property type="entry name" value="GatD_N"/>
</dbReference>
<dbReference type="InterPro" id="IPR037222">
    <property type="entry name" value="GatD_N_sf"/>
</dbReference>
<dbReference type="InterPro" id="IPR027473">
    <property type="entry name" value="L-asparaginase_C"/>
</dbReference>
<dbReference type="InterPro" id="IPR027474">
    <property type="entry name" value="L-asparaginase_N"/>
</dbReference>
<dbReference type="InterPro" id="IPR037152">
    <property type="entry name" value="L-asparaginase_N_sf"/>
</dbReference>
<dbReference type="NCBIfam" id="TIGR00519">
    <property type="entry name" value="asnASE_I"/>
    <property type="match status" value="1"/>
</dbReference>
<dbReference type="NCBIfam" id="TIGR02153">
    <property type="entry name" value="gatD_arch"/>
    <property type="match status" value="1"/>
</dbReference>
<dbReference type="NCBIfam" id="NF003217">
    <property type="entry name" value="PRK04183.1"/>
    <property type="match status" value="1"/>
</dbReference>
<dbReference type="PANTHER" id="PTHR11707:SF28">
    <property type="entry name" value="60 KDA LYSOPHOSPHOLIPASE"/>
    <property type="match status" value="1"/>
</dbReference>
<dbReference type="PANTHER" id="PTHR11707">
    <property type="entry name" value="L-ASPARAGINASE"/>
    <property type="match status" value="1"/>
</dbReference>
<dbReference type="Pfam" id="PF00710">
    <property type="entry name" value="Asparaginase"/>
    <property type="match status" value="1"/>
</dbReference>
<dbReference type="Pfam" id="PF17763">
    <property type="entry name" value="Asparaginase_C"/>
    <property type="match status" value="1"/>
</dbReference>
<dbReference type="Pfam" id="PF18195">
    <property type="entry name" value="GatD_N"/>
    <property type="match status" value="1"/>
</dbReference>
<dbReference type="PIRSF" id="PIRSF500175">
    <property type="entry name" value="Glu_ADT_D"/>
    <property type="match status" value="1"/>
</dbReference>
<dbReference type="PIRSF" id="PIRSF001220">
    <property type="entry name" value="L-ASNase_gatD"/>
    <property type="match status" value="1"/>
</dbReference>
<dbReference type="PRINTS" id="PR00139">
    <property type="entry name" value="ASNGLNASE"/>
</dbReference>
<dbReference type="SFLD" id="SFLDS00057">
    <property type="entry name" value="Glutaminase/Asparaginase"/>
    <property type="match status" value="1"/>
</dbReference>
<dbReference type="SMART" id="SM00870">
    <property type="entry name" value="Asparaginase"/>
    <property type="match status" value="1"/>
</dbReference>
<dbReference type="SUPFAM" id="SSF141300">
    <property type="entry name" value="GatD N-terminal domain-like"/>
    <property type="match status" value="1"/>
</dbReference>
<dbReference type="SUPFAM" id="SSF53774">
    <property type="entry name" value="Glutaminase/Asparaginase"/>
    <property type="match status" value="1"/>
</dbReference>
<dbReference type="PROSITE" id="PS00144">
    <property type="entry name" value="ASN_GLN_ASE_1"/>
    <property type="match status" value="1"/>
</dbReference>
<dbReference type="PROSITE" id="PS00917">
    <property type="entry name" value="ASN_GLN_ASE_2"/>
    <property type="match status" value="1"/>
</dbReference>
<dbReference type="PROSITE" id="PS51732">
    <property type="entry name" value="ASN_GLN_ASE_3"/>
    <property type="match status" value="1"/>
</dbReference>
<reference key="1">
    <citation type="journal article" date="2007" name="Proc. Natl. Acad. Sci. U.S.A.">
        <title>Genomic and metabolic adaptations of Methanobrevibacter smithii to the human gut.</title>
        <authorList>
            <person name="Samuel B.S."/>
            <person name="Hansen E.E."/>
            <person name="Manchester J.K."/>
            <person name="Coutinho P.M."/>
            <person name="Henrissat B."/>
            <person name="Fulton R."/>
            <person name="Latreille P."/>
            <person name="Kim K."/>
            <person name="Wilson R.K."/>
            <person name="Gordon J.I."/>
        </authorList>
    </citation>
    <scope>NUCLEOTIDE SEQUENCE [LARGE SCALE GENOMIC DNA]</scope>
    <source>
        <strain>ATCC 35061 / DSM 861 / OCM 144 / PS</strain>
    </source>
</reference>
<evidence type="ECO:0000255" key="1">
    <source>
        <dbReference type="HAMAP-Rule" id="MF_00586"/>
    </source>
</evidence>
<evidence type="ECO:0000255" key="2">
    <source>
        <dbReference type="PROSITE-ProRule" id="PRU01068"/>
    </source>
</evidence>
<name>GATD_METS3</name>
<keyword id="KW-0067">ATP-binding</keyword>
<keyword id="KW-0436">Ligase</keyword>
<keyword id="KW-0547">Nucleotide-binding</keyword>
<keyword id="KW-0648">Protein biosynthesis</keyword>
<feature type="chain" id="PRO_1000025459" description="Glutamyl-tRNA(Gln) amidotransferase subunit D">
    <location>
        <begin position="1"/>
        <end position="436"/>
    </location>
</feature>
<feature type="domain" description="Asparaginase/glutaminase" evidence="2">
    <location>
        <begin position="91"/>
        <end position="420"/>
    </location>
</feature>
<feature type="active site" evidence="1">
    <location>
        <position position="101"/>
    </location>
</feature>
<feature type="active site" evidence="1">
    <location>
        <position position="177"/>
    </location>
</feature>
<feature type="active site" evidence="1">
    <location>
        <position position="178"/>
    </location>
</feature>
<feature type="active site" evidence="1">
    <location>
        <position position="254"/>
    </location>
</feature>
<protein>
    <recommendedName>
        <fullName evidence="1">Glutamyl-tRNA(Gln) amidotransferase subunit D</fullName>
        <shortName evidence="1">Glu-ADT subunit D</shortName>
        <ecNumber evidence="1">6.3.5.-</ecNumber>
    </recommendedName>
</protein>
<proteinExistence type="inferred from homology"/>